<gene>
    <name type="ORF">SPAC926.02</name>
</gene>
<reference key="1">
    <citation type="journal article" date="2002" name="Nature">
        <title>The genome sequence of Schizosaccharomyces pombe.</title>
        <authorList>
            <person name="Wood V."/>
            <person name="Gwilliam R."/>
            <person name="Rajandream M.A."/>
            <person name="Lyne M.H."/>
            <person name="Lyne R."/>
            <person name="Stewart A."/>
            <person name="Sgouros J.G."/>
            <person name="Peat N."/>
            <person name="Hayles J."/>
            <person name="Baker S.G."/>
            <person name="Basham D."/>
            <person name="Bowman S."/>
            <person name="Brooks K."/>
            <person name="Brown D."/>
            <person name="Brown S."/>
            <person name="Chillingworth T."/>
            <person name="Churcher C.M."/>
            <person name="Collins M."/>
            <person name="Connor R."/>
            <person name="Cronin A."/>
            <person name="Davis P."/>
            <person name="Feltwell T."/>
            <person name="Fraser A."/>
            <person name="Gentles S."/>
            <person name="Goble A."/>
            <person name="Hamlin N."/>
            <person name="Harris D.E."/>
            <person name="Hidalgo J."/>
            <person name="Hodgson G."/>
            <person name="Holroyd S."/>
            <person name="Hornsby T."/>
            <person name="Howarth S."/>
            <person name="Huckle E.J."/>
            <person name="Hunt S."/>
            <person name="Jagels K."/>
            <person name="James K.D."/>
            <person name="Jones L."/>
            <person name="Jones M."/>
            <person name="Leather S."/>
            <person name="McDonald S."/>
            <person name="McLean J."/>
            <person name="Mooney P."/>
            <person name="Moule S."/>
            <person name="Mungall K.L."/>
            <person name="Murphy L.D."/>
            <person name="Niblett D."/>
            <person name="Odell C."/>
            <person name="Oliver K."/>
            <person name="O'Neil S."/>
            <person name="Pearson D."/>
            <person name="Quail M.A."/>
            <person name="Rabbinowitsch E."/>
            <person name="Rutherford K.M."/>
            <person name="Rutter S."/>
            <person name="Saunders D."/>
            <person name="Seeger K."/>
            <person name="Sharp S."/>
            <person name="Skelton J."/>
            <person name="Simmonds M.N."/>
            <person name="Squares R."/>
            <person name="Squares S."/>
            <person name="Stevens K."/>
            <person name="Taylor K."/>
            <person name="Taylor R.G."/>
            <person name="Tivey A."/>
            <person name="Walsh S.V."/>
            <person name="Warren T."/>
            <person name="Whitehead S."/>
            <person name="Woodward J.R."/>
            <person name="Volckaert G."/>
            <person name="Aert R."/>
            <person name="Robben J."/>
            <person name="Grymonprez B."/>
            <person name="Weltjens I."/>
            <person name="Vanstreels E."/>
            <person name="Rieger M."/>
            <person name="Schaefer M."/>
            <person name="Mueller-Auer S."/>
            <person name="Gabel C."/>
            <person name="Fuchs M."/>
            <person name="Duesterhoeft A."/>
            <person name="Fritzc C."/>
            <person name="Holzer E."/>
            <person name="Moestl D."/>
            <person name="Hilbert H."/>
            <person name="Borzym K."/>
            <person name="Langer I."/>
            <person name="Beck A."/>
            <person name="Lehrach H."/>
            <person name="Reinhardt R."/>
            <person name="Pohl T.M."/>
            <person name="Eger P."/>
            <person name="Zimmermann W."/>
            <person name="Wedler H."/>
            <person name="Wambutt R."/>
            <person name="Purnelle B."/>
            <person name="Goffeau A."/>
            <person name="Cadieu E."/>
            <person name="Dreano S."/>
            <person name="Gloux S."/>
            <person name="Lelaure V."/>
            <person name="Mottier S."/>
            <person name="Galibert F."/>
            <person name="Aves S.J."/>
            <person name="Xiang Z."/>
            <person name="Hunt C."/>
            <person name="Moore K."/>
            <person name="Hurst S.M."/>
            <person name="Lucas M."/>
            <person name="Rochet M."/>
            <person name="Gaillardin C."/>
            <person name="Tallada V.A."/>
            <person name="Garzon A."/>
            <person name="Thode G."/>
            <person name="Daga R.R."/>
            <person name="Cruzado L."/>
            <person name="Jimenez J."/>
            <person name="Sanchez M."/>
            <person name="del Rey F."/>
            <person name="Benito J."/>
            <person name="Dominguez A."/>
            <person name="Revuelta J.L."/>
            <person name="Moreno S."/>
            <person name="Armstrong J."/>
            <person name="Forsburg S.L."/>
            <person name="Cerutti L."/>
            <person name="Lowe T."/>
            <person name="McCombie W.R."/>
            <person name="Paulsen I."/>
            <person name="Potashkin J."/>
            <person name="Shpakovski G.V."/>
            <person name="Ussery D."/>
            <person name="Barrell B.G."/>
            <person name="Nurse P."/>
        </authorList>
    </citation>
    <scope>NUCLEOTIDE SEQUENCE [LARGE SCALE GENOMIC DNA]</scope>
    <source>
        <strain>972 / ATCC 24843</strain>
    </source>
</reference>
<reference key="2">
    <citation type="journal article" date="2006" name="Nat. Biotechnol.">
        <title>ORFeome cloning and global analysis of protein localization in the fission yeast Schizosaccharomyces pombe.</title>
        <authorList>
            <person name="Matsuyama A."/>
            <person name="Arai R."/>
            <person name="Yashiroda Y."/>
            <person name="Shirai A."/>
            <person name="Kamata A."/>
            <person name="Sekido S."/>
            <person name="Kobayashi Y."/>
            <person name="Hashimoto A."/>
            <person name="Hamamoto M."/>
            <person name="Hiraoka Y."/>
            <person name="Horinouchi S."/>
            <person name="Yoshida M."/>
        </authorList>
    </citation>
    <scope>SUBCELLULAR LOCATION [LARGE SCALE ANALYSIS]</scope>
</reference>
<organism>
    <name type="scientific">Schizosaccharomyces pombe (strain 972 / ATCC 24843)</name>
    <name type="common">Fission yeast</name>
    <dbReference type="NCBI Taxonomy" id="284812"/>
    <lineage>
        <taxon>Eukaryota</taxon>
        <taxon>Fungi</taxon>
        <taxon>Dikarya</taxon>
        <taxon>Ascomycota</taxon>
        <taxon>Taphrinomycotina</taxon>
        <taxon>Schizosaccharomycetes</taxon>
        <taxon>Schizosaccharomycetales</taxon>
        <taxon>Schizosaccharomycetaceae</taxon>
        <taxon>Schizosaccharomyces</taxon>
    </lineage>
</organism>
<comment type="subcellular location">
    <subcellularLocation>
        <location evidence="1">Cytoplasm</location>
    </subcellularLocation>
    <subcellularLocation>
        <location evidence="1">Nucleus</location>
    </subcellularLocation>
</comment>
<comment type="similarity">
    <text evidence="2">Belongs to the UPF0656 family.</text>
</comment>
<dbReference type="EMBL" id="CU329670">
    <property type="protein sequence ID" value="CAB54150.1"/>
    <property type="molecule type" value="Genomic_DNA"/>
</dbReference>
<dbReference type="PIR" id="T39200">
    <property type="entry name" value="T39200"/>
</dbReference>
<dbReference type="RefSeq" id="NP_594363.1">
    <property type="nucleotide sequence ID" value="NM_001019784.2"/>
</dbReference>
<dbReference type="SMR" id="Q9UUG6"/>
<dbReference type="BioGRID" id="279964">
    <property type="interactions" value="7"/>
</dbReference>
<dbReference type="STRING" id="284812.Q9UUG6"/>
<dbReference type="iPTMnet" id="Q9UUG6"/>
<dbReference type="PaxDb" id="4896-SPAC926.02.1"/>
<dbReference type="EnsemblFungi" id="SPAC926.02.1">
    <property type="protein sequence ID" value="SPAC926.02.1:pep"/>
    <property type="gene ID" value="SPAC926.02"/>
</dbReference>
<dbReference type="KEGG" id="spo:2543547"/>
<dbReference type="PomBase" id="SPAC926.02"/>
<dbReference type="VEuPathDB" id="FungiDB:SPAC926.02"/>
<dbReference type="eggNOG" id="ENOG502RZIA">
    <property type="taxonomic scope" value="Eukaryota"/>
</dbReference>
<dbReference type="HOGENOM" id="CLU_636406_0_0_1"/>
<dbReference type="InParanoid" id="Q9UUG6"/>
<dbReference type="OMA" id="RTRIWIS"/>
<dbReference type="PRO" id="PR:Q9UUG6"/>
<dbReference type="Proteomes" id="UP000002485">
    <property type="component" value="Chromosome I"/>
</dbReference>
<dbReference type="GO" id="GO:0005829">
    <property type="term" value="C:cytosol"/>
    <property type="evidence" value="ECO:0007005"/>
    <property type="project" value="PomBase"/>
</dbReference>
<dbReference type="GO" id="GO:0005634">
    <property type="term" value="C:nucleus"/>
    <property type="evidence" value="ECO:0007005"/>
    <property type="project" value="PomBase"/>
</dbReference>
<dbReference type="Gene3D" id="1.25.40.10">
    <property type="entry name" value="Tetratricopeptide repeat domain"/>
    <property type="match status" value="1"/>
</dbReference>
<dbReference type="InterPro" id="IPR011990">
    <property type="entry name" value="TPR-like_helical_dom_sf"/>
</dbReference>
<dbReference type="SUPFAM" id="SSF48452">
    <property type="entry name" value="TPR-like"/>
    <property type="match status" value="1"/>
</dbReference>
<proteinExistence type="inferred from homology"/>
<sequence>MSFSRNQVLKGLKTKKAKPKKNPTVDELFEIAIDLEESGDRWRLEPAKCLRFYQKSLETYDRYLLQCPNDFDARFNKARLLLNMATNCDMLYKDSQVCLQKSIEMHKHALLLQEAPDIWFNLAQVHLNLAEIWVDLDREDLAYPEIQQALQSISHSIDLQERERIEWENTIQTSSQQKYEEIPDIQARRLYFIEADKEASTLVTEIASLACSCKLLEESDFEKLCQIMLPITEKLDILKLMDWYLAKTKRLVLGGKENEVAWIDLLQVFDHQLSQLPQLNLQNPLDPNSSVKPLHIQLLCDKADAYIDFAETLLDSCVSTEESASIEIMTRAWNMLGVAAKSLKMANTYNPNHVRILISRADLEIQRAAIPIMVAQNSKLVLYKNAKVLYEKAFRDYSTKKTTRTFAEIVLKHYQLQKLTNPETIKMLDSLTEVAQEDILNTI</sequence>
<protein>
    <recommendedName>
        <fullName>UPF0656 protein C926.02</fullName>
    </recommendedName>
</protein>
<name>YFT2_SCHPO</name>
<keyword id="KW-0963">Cytoplasm</keyword>
<keyword id="KW-0539">Nucleus</keyword>
<keyword id="KW-1185">Reference proteome</keyword>
<feature type="chain" id="PRO_0000351422" description="UPF0656 protein C926.02">
    <location>
        <begin position="1"/>
        <end position="443"/>
    </location>
</feature>
<evidence type="ECO:0000269" key="1">
    <source>
    </source>
</evidence>
<evidence type="ECO:0000305" key="2"/>
<accession>Q9UUG6</accession>